<proteinExistence type="inferred from homology"/>
<evidence type="ECO:0000255" key="1">
    <source>
        <dbReference type="HAMAP-Rule" id="MF_00749"/>
    </source>
</evidence>
<evidence type="ECO:0000256" key="2">
    <source>
        <dbReference type="SAM" id="MobiDB-lite"/>
    </source>
</evidence>
<protein>
    <recommendedName>
        <fullName evidence="1">RNA chaperone ProQ</fullName>
    </recommendedName>
</protein>
<name>PROQ_YERPB</name>
<comment type="function">
    <text evidence="1">RNA chaperone with significant RNA binding, RNA strand exchange and RNA duplexing activities. May regulate ProP activity through an RNA-based, post-transcriptional mechanism.</text>
</comment>
<comment type="subcellular location">
    <subcellularLocation>
        <location evidence="1">Cytoplasm</location>
    </subcellularLocation>
</comment>
<comment type="similarity">
    <text evidence="1">Belongs to the ProQ family.</text>
</comment>
<reference key="1">
    <citation type="submission" date="2008-04" db="EMBL/GenBank/DDBJ databases">
        <title>Complete sequence of Yersinia pseudotuberculosis PB1/+.</title>
        <authorList>
            <person name="Copeland A."/>
            <person name="Lucas S."/>
            <person name="Lapidus A."/>
            <person name="Glavina del Rio T."/>
            <person name="Dalin E."/>
            <person name="Tice H."/>
            <person name="Bruce D."/>
            <person name="Goodwin L."/>
            <person name="Pitluck S."/>
            <person name="Munk A.C."/>
            <person name="Brettin T."/>
            <person name="Detter J.C."/>
            <person name="Han C."/>
            <person name="Tapia R."/>
            <person name="Schmutz J."/>
            <person name="Larimer F."/>
            <person name="Land M."/>
            <person name="Hauser L."/>
            <person name="Challacombe J.F."/>
            <person name="Green L."/>
            <person name="Lindler L.E."/>
            <person name="Nikolich M.P."/>
            <person name="Richardson P."/>
        </authorList>
    </citation>
    <scope>NUCLEOTIDE SEQUENCE [LARGE SCALE GENOMIC DNA]</scope>
    <source>
        <strain>PB1/+</strain>
    </source>
</reference>
<accession>B2K6A4</accession>
<sequence>MENQPKLNSSKEVIAFLAERFPLCFTAEGEARPLKIGIFQDLVERVQGEENLSKTQLRSALRLYTSSWRYLYGVKVGAERVDLDGNPCGVLEEQHVEHARKQLEEAKARVQAQRAEQQAKKREAAIAAGETPEPRRPRPAGKKPAPRREAGAAPENRKPRQSPRPQQVRPPRPQVEENQPRPVPVTDISKLQIGQEIKVRAGKSAMDATVLEIAKDGVRVQLSSGLAMIVRAEHLQF</sequence>
<dbReference type="EMBL" id="CP001048">
    <property type="protein sequence ID" value="ACC89413.1"/>
    <property type="molecule type" value="Genomic_DNA"/>
</dbReference>
<dbReference type="RefSeq" id="WP_002210849.1">
    <property type="nucleotide sequence ID" value="NZ_CP009780.1"/>
</dbReference>
<dbReference type="SMR" id="B2K6A4"/>
<dbReference type="GeneID" id="96665860"/>
<dbReference type="KEGG" id="ypb:YPTS_2452"/>
<dbReference type="PATRIC" id="fig|502801.10.peg.1862"/>
<dbReference type="GO" id="GO:0005829">
    <property type="term" value="C:cytosol"/>
    <property type="evidence" value="ECO:0007669"/>
    <property type="project" value="TreeGrafter"/>
</dbReference>
<dbReference type="GO" id="GO:0033592">
    <property type="term" value="F:RNA strand annealing activity"/>
    <property type="evidence" value="ECO:0007669"/>
    <property type="project" value="UniProtKB-UniRule"/>
</dbReference>
<dbReference type="GO" id="GO:0034057">
    <property type="term" value="F:RNA strand-exchange activity"/>
    <property type="evidence" value="ECO:0007669"/>
    <property type="project" value="UniProtKB-UniRule"/>
</dbReference>
<dbReference type="GO" id="GO:0010608">
    <property type="term" value="P:post-transcriptional regulation of gene expression"/>
    <property type="evidence" value="ECO:0007669"/>
    <property type="project" value="InterPro"/>
</dbReference>
<dbReference type="FunFam" id="1.10.1710.10:FF:000001">
    <property type="entry name" value="RNA chaperone ProQ"/>
    <property type="match status" value="1"/>
</dbReference>
<dbReference type="Gene3D" id="1.10.1710.10">
    <property type="entry name" value="ProQ/FinO domain"/>
    <property type="match status" value="1"/>
</dbReference>
<dbReference type="HAMAP" id="MF_00749">
    <property type="entry name" value="ProQ"/>
    <property type="match status" value="1"/>
</dbReference>
<dbReference type="InterPro" id="IPR023529">
    <property type="entry name" value="ProQ"/>
</dbReference>
<dbReference type="InterPro" id="IPR016103">
    <property type="entry name" value="ProQ/FinO"/>
</dbReference>
<dbReference type="InterPro" id="IPR036442">
    <property type="entry name" value="ProQ/FinO_sf"/>
</dbReference>
<dbReference type="InterPro" id="IPR035236">
    <property type="entry name" value="ProQ_C"/>
</dbReference>
<dbReference type="NCBIfam" id="NF003434">
    <property type="entry name" value="PRK04950.1"/>
    <property type="match status" value="1"/>
</dbReference>
<dbReference type="PANTHER" id="PTHR38106">
    <property type="entry name" value="RNA CHAPERONE PROQ"/>
    <property type="match status" value="1"/>
</dbReference>
<dbReference type="PANTHER" id="PTHR38106:SF1">
    <property type="entry name" value="RNA CHAPERONE PROQ"/>
    <property type="match status" value="1"/>
</dbReference>
<dbReference type="Pfam" id="PF04352">
    <property type="entry name" value="ProQ"/>
    <property type="match status" value="1"/>
</dbReference>
<dbReference type="Pfam" id="PF17516">
    <property type="entry name" value="ProQ_C"/>
    <property type="match status" value="1"/>
</dbReference>
<dbReference type="SMART" id="SM00945">
    <property type="entry name" value="ProQ"/>
    <property type="match status" value="1"/>
</dbReference>
<dbReference type="SUPFAM" id="SSF48657">
    <property type="entry name" value="FinO-like"/>
    <property type="match status" value="1"/>
</dbReference>
<keyword id="KW-0143">Chaperone</keyword>
<keyword id="KW-0963">Cytoplasm</keyword>
<keyword id="KW-0694">RNA-binding</keyword>
<gene>
    <name evidence="1" type="primary">proQ</name>
    <name type="ordered locus">YPTS_2452</name>
</gene>
<organism>
    <name type="scientific">Yersinia pseudotuberculosis serotype IB (strain PB1/+)</name>
    <dbReference type="NCBI Taxonomy" id="502801"/>
    <lineage>
        <taxon>Bacteria</taxon>
        <taxon>Pseudomonadati</taxon>
        <taxon>Pseudomonadota</taxon>
        <taxon>Gammaproteobacteria</taxon>
        <taxon>Enterobacterales</taxon>
        <taxon>Yersiniaceae</taxon>
        <taxon>Yersinia</taxon>
    </lineage>
</organism>
<feature type="chain" id="PRO_1000133312" description="RNA chaperone ProQ">
    <location>
        <begin position="1"/>
        <end position="237"/>
    </location>
</feature>
<feature type="region of interest" description="Disordered" evidence="2">
    <location>
        <begin position="106"/>
        <end position="188"/>
    </location>
</feature>
<feature type="compositionally biased region" description="Basic and acidic residues" evidence="2">
    <location>
        <begin position="146"/>
        <end position="158"/>
    </location>
</feature>